<name>UBID_PSEAE</name>
<gene>
    <name evidence="1" type="primary">ubiD</name>
    <name type="ordered locus">PA5237</name>
</gene>
<comment type="function">
    <text evidence="1">Catalyzes the decarboxylation of 3-octaprenyl-4-hydroxy benzoate to 2-octaprenylphenol, an intermediate step in ubiquinone biosynthesis.</text>
</comment>
<comment type="catalytic activity">
    <reaction evidence="1">
        <text>a 4-hydroxy-3-(all-trans-polyprenyl)benzoate + H(+) = a 2-(all-trans-polyprenyl)phenol + CO2</text>
        <dbReference type="Rhea" id="RHEA:41680"/>
        <dbReference type="Rhea" id="RHEA-COMP:9514"/>
        <dbReference type="Rhea" id="RHEA-COMP:9516"/>
        <dbReference type="ChEBI" id="CHEBI:1269"/>
        <dbReference type="ChEBI" id="CHEBI:15378"/>
        <dbReference type="ChEBI" id="CHEBI:16526"/>
        <dbReference type="ChEBI" id="CHEBI:78396"/>
        <dbReference type="EC" id="4.1.1.98"/>
    </reaction>
</comment>
<comment type="cofactor">
    <cofactor evidence="1">
        <name>prenylated FMN</name>
        <dbReference type="ChEBI" id="CHEBI:87746"/>
    </cofactor>
    <text evidence="1">Binds 1 prenylated FMN per subunit.</text>
</comment>
<comment type="cofactor">
    <cofactor evidence="1">
        <name>Mn(2+)</name>
        <dbReference type="ChEBI" id="CHEBI:29035"/>
    </cofactor>
</comment>
<comment type="pathway">
    <text evidence="1">Cofactor biosynthesis; ubiquinone biosynthesis.</text>
</comment>
<comment type="subunit">
    <text evidence="1">Homohexamer.</text>
</comment>
<comment type="subcellular location">
    <subcellularLocation>
        <location evidence="1">Cell membrane</location>
        <topology evidence="1">Peripheral membrane protein</topology>
    </subcellularLocation>
</comment>
<comment type="similarity">
    <text evidence="1">Belongs to the UbiD family.</text>
</comment>
<organism>
    <name type="scientific">Pseudomonas aeruginosa (strain ATCC 15692 / DSM 22644 / CIP 104116 / JCM 14847 / LMG 12228 / 1C / PRS 101 / PAO1)</name>
    <dbReference type="NCBI Taxonomy" id="208964"/>
    <lineage>
        <taxon>Bacteria</taxon>
        <taxon>Pseudomonadati</taxon>
        <taxon>Pseudomonadota</taxon>
        <taxon>Gammaproteobacteria</taxon>
        <taxon>Pseudomonadales</taxon>
        <taxon>Pseudomonadaceae</taxon>
        <taxon>Pseudomonas</taxon>
    </lineage>
</organism>
<accession>Q9HTV3</accession>
<protein>
    <recommendedName>
        <fullName evidence="1">3-octaprenyl-4-hydroxybenzoate carboxy-lyase</fullName>
        <ecNumber evidence="1">4.1.1.98</ecNumber>
    </recommendedName>
    <alternativeName>
        <fullName evidence="1">Polyprenyl p-hydroxybenzoate decarboxylase</fullName>
    </alternativeName>
</protein>
<sequence>MTFKDLRDFIAQLEQRGALKRIQVPISPVLEMTEVCDRTLRAKGPALLFEKPTGFDMPVLGNLFGTPERVALGMGAEDVGALREIGKLLAQLKEPEPPKGLKDAWAKLPMYRKVLSMAPKVLKDAPCQEVVEEGEDVDLGRLPVQTCWPGDVGPLITWGLTVTRGPNKERQNLGIYRQQVIGRNKVIMRWLSHRGGALDYREWCQKHPGQPYPVAVALGADPATILGAVTPVPDTLSEYAFAGLLRGHRTELVKCRGSDLQVPASAEIVLEGVIHPGEMADEGPYGDHTGYYNEVDRFPVFTVERVTRRQKPIYHSTYTGRPPDEPAILGVALNEVFVPILQKQFPEIVDFYLPPEGCSYRMAVVTMKKQYPGHAKRVMLGVWSFLRQFMYTKFVIVTDDDIDARDWNDVIWAITTRMDPKRDTVMIDNTPIDYLDFASPVSGLGSKMGLDATHKWPGETSREWGRAIVKDEAVTRRIDALWSSLGID</sequence>
<feature type="chain" id="PRO_0000157364" description="3-octaprenyl-4-hydroxybenzoate carboxy-lyase">
    <location>
        <begin position="1"/>
        <end position="488"/>
    </location>
</feature>
<feature type="active site" description="Proton donor" evidence="1">
    <location>
        <position position="287"/>
    </location>
</feature>
<feature type="binding site" evidence="1">
    <location>
        <position position="172"/>
    </location>
    <ligand>
        <name>Mn(2+)</name>
        <dbReference type="ChEBI" id="CHEBI:29035"/>
    </ligand>
</feature>
<feature type="binding site" evidence="1">
    <location>
        <begin position="175"/>
        <end position="177"/>
    </location>
    <ligand>
        <name>prenylated FMN</name>
        <dbReference type="ChEBI" id="CHEBI:87746"/>
    </ligand>
</feature>
<feature type="binding site" evidence="1">
    <location>
        <begin position="189"/>
        <end position="191"/>
    </location>
    <ligand>
        <name>prenylated FMN</name>
        <dbReference type="ChEBI" id="CHEBI:87746"/>
    </ligand>
</feature>
<feature type="binding site" evidence="1">
    <location>
        <begin position="194"/>
        <end position="195"/>
    </location>
    <ligand>
        <name>prenylated FMN</name>
        <dbReference type="ChEBI" id="CHEBI:87746"/>
    </ligand>
</feature>
<feature type="binding site" evidence="1">
    <location>
        <position position="238"/>
    </location>
    <ligand>
        <name>Mn(2+)</name>
        <dbReference type="ChEBI" id="CHEBI:29035"/>
    </ligand>
</feature>
<reference key="1">
    <citation type="journal article" date="2000" name="Nature">
        <title>Complete genome sequence of Pseudomonas aeruginosa PAO1, an opportunistic pathogen.</title>
        <authorList>
            <person name="Stover C.K."/>
            <person name="Pham X.-Q.T."/>
            <person name="Erwin A.L."/>
            <person name="Mizoguchi S.D."/>
            <person name="Warrener P."/>
            <person name="Hickey M.J."/>
            <person name="Brinkman F.S.L."/>
            <person name="Hufnagle W.O."/>
            <person name="Kowalik D.J."/>
            <person name="Lagrou M."/>
            <person name="Garber R.L."/>
            <person name="Goltry L."/>
            <person name="Tolentino E."/>
            <person name="Westbrock-Wadman S."/>
            <person name="Yuan Y."/>
            <person name="Brody L.L."/>
            <person name="Coulter S.N."/>
            <person name="Folger K.R."/>
            <person name="Kas A."/>
            <person name="Larbig K."/>
            <person name="Lim R.M."/>
            <person name="Smith K.A."/>
            <person name="Spencer D.H."/>
            <person name="Wong G.K.-S."/>
            <person name="Wu Z."/>
            <person name="Paulsen I.T."/>
            <person name="Reizer J."/>
            <person name="Saier M.H. Jr."/>
            <person name="Hancock R.E.W."/>
            <person name="Lory S."/>
            <person name="Olson M.V."/>
        </authorList>
    </citation>
    <scope>NUCLEOTIDE SEQUENCE [LARGE SCALE GENOMIC DNA]</scope>
    <source>
        <strain>ATCC 15692 / DSM 22644 / CIP 104116 / JCM 14847 / LMG 12228 / 1C / PRS 101 / PAO1</strain>
    </source>
</reference>
<dbReference type="EC" id="4.1.1.98" evidence="1"/>
<dbReference type="EMBL" id="AE004091">
    <property type="protein sequence ID" value="AAG08622.1"/>
    <property type="molecule type" value="Genomic_DNA"/>
</dbReference>
<dbReference type="PIR" id="D82991">
    <property type="entry name" value="D82991"/>
</dbReference>
<dbReference type="RefSeq" id="NP_253924.1">
    <property type="nucleotide sequence ID" value="NC_002516.2"/>
</dbReference>
<dbReference type="RefSeq" id="WP_003096332.1">
    <property type="nucleotide sequence ID" value="NZ_QZGE01000002.1"/>
</dbReference>
<dbReference type="SMR" id="Q9HTV3"/>
<dbReference type="FunCoup" id="Q9HTV3">
    <property type="interactions" value="465"/>
</dbReference>
<dbReference type="STRING" id="208964.PA5237"/>
<dbReference type="PaxDb" id="208964-PA5237"/>
<dbReference type="GeneID" id="880853"/>
<dbReference type="KEGG" id="pae:PA5237"/>
<dbReference type="PATRIC" id="fig|208964.12.peg.5488"/>
<dbReference type="PseudoCAP" id="PA5237"/>
<dbReference type="HOGENOM" id="CLU_023348_4_1_6"/>
<dbReference type="InParanoid" id="Q9HTV3"/>
<dbReference type="OrthoDB" id="9809841at2"/>
<dbReference type="PhylomeDB" id="Q9HTV3"/>
<dbReference type="BioCyc" id="PAER208964:G1FZ6-5357-MONOMER"/>
<dbReference type="UniPathway" id="UPA00232"/>
<dbReference type="Proteomes" id="UP000002438">
    <property type="component" value="Chromosome"/>
</dbReference>
<dbReference type="GO" id="GO:0005737">
    <property type="term" value="C:cytoplasm"/>
    <property type="evidence" value="ECO:0000318"/>
    <property type="project" value="GO_Central"/>
</dbReference>
<dbReference type="GO" id="GO:0005829">
    <property type="term" value="C:cytosol"/>
    <property type="evidence" value="ECO:0000318"/>
    <property type="project" value="GO_Central"/>
</dbReference>
<dbReference type="GO" id="GO:0005886">
    <property type="term" value="C:plasma membrane"/>
    <property type="evidence" value="ECO:0007669"/>
    <property type="project" value="UniProtKB-SubCell"/>
</dbReference>
<dbReference type="GO" id="GO:0008694">
    <property type="term" value="F:3-octaprenyl-4-hydroxybenzoate carboxy-lyase activity"/>
    <property type="evidence" value="ECO:0000318"/>
    <property type="project" value="GO_Central"/>
</dbReference>
<dbReference type="GO" id="GO:0046872">
    <property type="term" value="F:metal ion binding"/>
    <property type="evidence" value="ECO:0007669"/>
    <property type="project" value="UniProtKB-KW"/>
</dbReference>
<dbReference type="GO" id="GO:0006744">
    <property type="term" value="P:ubiquinone biosynthetic process"/>
    <property type="evidence" value="ECO:0000318"/>
    <property type="project" value="GO_Central"/>
</dbReference>
<dbReference type="FunFam" id="1.20.5.570:FF:000001">
    <property type="entry name" value="3-octaprenyl-4-hydroxybenzoate carboxy-lyase"/>
    <property type="match status" value="1"/>
</dbReference>
<dbReference type="FunFam" id="3.40.1670.10:FF:000001">
    <property type="entry name" value="3-octaprenyl-4-hydroxybenzoate carboxy-lyase"/>
    <property type="match status" value="1"/>
</dbReference>
<dbReference type="Gene3D" id="1.20.5.570">
    <property type="entry name" value="Single helix bin"/>
    <property type="match status" value="1"/>
</dbReference>
<dbReference type="Gene3D" id="3.40.1670.10">
    <property type="entry name" value="UbiD C-terminal domain-like"/>
    <property type="match status" value="1"/>
</dbReference>
<dbReference type="HAMAP" id="MF_01636">
    <property type="entry name" value="UbiD"/>
    <property type="match status" value="1"/>
</dbReference>
<dbReference type="InterPro" id="IPR002830">
    <property type="entry name" value="UbiD"/>
</dbReference>
<dbReference type="InterPro" id="IPR049381">
    <property type="entry name" value="UbiD-like_C"/>
</dbReference>
<dbReference type="InterPro" id="IPR049383">
    <property type="entry name" value="UbiD-like_N"/>
</dbReference>
<dbReference type="InterPro" id="IPR023677">
    <property type="entry name" value="UbiD_bacteria"/>
</dbReference>
<dbReference type="InterPro" id="IPR048304">
    <property type="entry name" value="UbiD_Rift_dom"/>
</dbReference>
<dbReference type="NCBIfam" id="NF008175">
    <property type="entry name" value="PRK10922.1"/>
    <property type="match status" value="1"/>
</dbReference>
<dbReference type="NCBIfam" id="TIGR00148">
    <property type="entry name" value="UbiD family decarboxylase"/>
    <property type="match status" value="1"/>
</dbReference>
<dbReference type="PANTHER" id="PTHR30108">
    <property type="entry name" value="3-OCTAPRENYL-4-HYDROXYBENZOATE CARBOXY-LYASE-RELATED"/>
    <property type="match status" value="1"/>
</dbReference>
<dbReference type="PANTHER" id="PTHR30108:SF17">
    <property type="entry name" value="FERULIC ACID DECARBOXYLASE 1"/>
    <property type="match status" value="1"/>
</dbReference>
<dbReference type="Pfam" id="PF01977">
    <property type="entry name" value="UbiD"/>
    <property type="match status" value="1"/>
</dbReference>
<dbReference type="Pfam" id="PF20696">
    <property type="entry name" value="UbiD_C"/>
    <property type="match status" value="1"/>
</dbReference>
<dbReference type="Pfam" id="PF20695">
    <property type="entry name" value="UbiD_N"/>
    <property type="match status" value="1"/>
</dbReference>
<dbReference type="SUPFAM" id="SSF50475">
    <property type="entry name" value="FMN-binding split barrel"/>
    <property type="match status" value="1"/>
</dbReference>
<dbReference type="SUPFAM" id="SSF143968">
    <property type="entry name" value="UbiD C-terminal domain-like"/>
    <property type="match status" value="1"/>
</dbReference>
<evidence type="ECO:0000255" key="1">
    <source>
        <dbReference type="HAMAP-Rule" id="MF_01636"/>
    </source>
</evidence>
<proteinExistence type="inferred from homology"/>
<keyword id="KW-1003">Cell membrane</keyword>
<keyword id="KW-0210">Decarboxylase</keyword>
<keyword id="KW-0285">Flavoprotein</keyword>
<keyword id="KW-0288">FMN</keyword>
<keyword id="KW-0456">Lyase</keyword>
<keyword id="KW-0464">Manganese</keyword>
<keyword id="KW-0472">Membrane</keyword>
<keyword id="KW-0479">Metal-binding</keyword>
<keyword id="KW-1185">Reference proteome</keyword>
<keyword id="KW-0831">Ubiquinone biosynthesis</keyword>